<accession>P59282</accession>
<accession>Q2VYF3</accession>
<name>TPPP2_HUMAN</name>
<proteinExistence type="evidence at protein level"/>
<protein>
    <recommendedName>
        <fullName evidence="9">Tubulin polymerization-promoting protein family member 2</fullName>
    </recommendedName>
    <alternativeName>
        <fullName evidence="10">Protein p25-beta</fullName>
    </alternativeName>
    <alternativeName>
        <fullName evidence="8">TPPP/p18</fullName>
    </alternativeName>
</protein>
<sequence>MASEAEKTFHRFAAFGESSSSGTEMNNKNFSKLCKDCGIMDGKTVTSTDVDIVFSKVKAKNARTITFQQFKEAVKELGQKRFKGKSPDEVLENIYGLMEGKDPATTGATKATTVGAVDRLTDTSKYTGTHKERFDESGKGKGIAGREEMTDNTGYVSGYKGSGTYDKKTK</sequence>
<evidence type="ECO:0000250" key="1">
    <source>
        <dbReference type="UniProtKB" id="Q0P5Y3"/>
    </source>
</evidence>
<evidence type="ECO:0000256" key="2">
    <source>
        <dbReference type="SAM" id="MobiDB-lite"/>
    </source>
</evidence>
<evidence type="ECO:0000269" key="3">
    <source>
    </source>
</evidence>
<evidence type="ECO:0000269" key="4">
    <source>
    </source>
</evidence>
<evidence type="ECO:0000269" key="5">
    <source>
    </source>
</evidence>
<evidence type="ECO:0000269" key="6">
    <source ref="1"/>
</evidence>
<evidence type="ECO:0000269" key="7">
    <source ref="2"/>
</evidence>
<evidence type="ECO:0000303" key="8">
    <source>
    </source>
</evidence>
<evidence type="ECO:0000303" key="9">
    <source>
    </source>
</evidence>
<evidence type="ECO:0000303" key="10">
    <source ref="1"/>
</evidence>
<evidence type="ECO:0000305" key="11"/>
<evidence type="ECO:0000305" key="12">
    <source>
    </source>
</evidence>
<evidence type="ECO:0000305" key="13">
    <source>
    </source>
</evidence>
<evidence type="ECO:0000312" key="14">
    <source>
        <dbReference type="HGNC" id="HGNC:19293"/>
    </source>
</evidence>
<comment type="function">
    <text evidence="4 13">Probable regulator of microtubule dynamics required for sperm motility (Probable). In contrast to other members of the family, has no microtubule bundling activity (PubMed:17105200).</text>
</comment>
<comment type="subcellular location">
    <subcellularLocation>
        <location evidence="12">Cytoplasm</location>
        <location evidence="12">Cytosol</location>
    </subcellularLocation>
    <subcellularLocation>
        <location evidence="1">Cell projection</location>
        <location evidence="1">Cilium</location>
        <location evidence="1">Flagellum</location>
    </subcellularLocation>
    <text evidence="1">Present in the middle piece of sperm tail.</text>
</comment>
<comment type="tissue specificity">
    <text evidence="5">Expressed in spermatids (PubMed:23436708). Detected in liver cancer (at protein level) (PubMed:23436708).</text>
</comment>
<comment type="similarity">
    <text evidence="11">Belongs to the TPPP family.</text>
</comment>
<dbReference type="EMBL" id="AY072034">
    <property type="protein sequence ID" value="AAL62338.1"/>
    <property type="molecule type" value="mRNA"/>
</dbReference>
<dbReference type="EMBL" id="AY173946">
    <property type="protein sequence ID" value="AAO49716.1"/>
    <property type="molecule type" value="mRNA"/>
</dbReference>
<dbReference type="EMBL" id="AL161668">
    <property type="status" value="NOT_ANNOTATED_CDS"/>
    <property type="molecule type" value="mRNA"/>
</dbReference>
<dbReference type="EMBL" id="BC038970">
    <property type="protein sequence ID" value="AAH38970.1"/>
    <property type="molecule type" value="mRNA"/>
</dbReference>
<dbReference type="CCDS" id="CCDS9566.1"/>
<dbReference type="RefSeq" id="NP_776245.2">
    <property type="nucleotide sequence ID" value="NM_173846.5"/>
</dbReference>
<dbReference type="RefSeq" id="XP_005267381.1">
    <property type="nucleotide sequence ID" value="XM_005267324.4"/>
</dbReference>
<dbReference type="RefSeq" id="XP_016876455.1">
    <property type="nucleotide sequence ID" value="XM_017020966.2"/>
</dbReference>
<dbReference type="RefSeq" id="XP_054231327.1">
    <property type="nucleotide sequence ID" value="XM_054375352.1"/>
</dbReference>
<dbReference type="RefSeq" id="XP_054231328.1">
    <property type="nucleotide sequence ID" value="XM_054375353.1"/>
</dbReference>
<dbReference type="SMR" id="P59282"/>
<dbReference type="BioGRID" id="125786">
    <property type="interactions" value="11"/>
</dbReference>
<dbReference type="FunCoup" id="P59282">
    <property type="interactions" value="22"/>
</dbReference>
<dbReference type="IntAct" id="P59282">
    <property type="interactions" value="8"/>
</dbReference>
<dbReference type="STRING" id="9606.ENSP00000317595"/>
<dbReference type="iPTMnet" id="P59282"/>
<dbReference type="PhosphoSitePlus" id="P59282"/>
<dbReference type="BioMuta" id="TPPP2"/>
<dbReference type="DMDM" id="288558831"/>
<dbReference type="MassIVE" id="P59282"/>
<dbReference type="PaxDb" id="9606-ENSP00000317595"/>
<dbReference type="PeptideAtlas" id="P59282"/>
<dbReference type="ProteomicsDB" id="57137"/>
<dbReference type="Antibodypedia" id="70">
    <property type="antibodies" value="52 antibodies from 15 providers"/>
</dbReference>
<dbReference type="DNASU" id="122664"/>
<dbReference type="Ensembl" id="ENST00000321760.11">
    <property type="protein sequence ID" value="ENSP00000317595.6"/>
    <property type="gene ID" value="ENSG00000179636.15"/>
</dbReference>
<dbReference type="Ensembl" id="ENST00000530140.6">
    <property type="protein sequence ID" value="ENSP00000435356.2"/>
    <property type="gene ID" value="ENSG00000179636.15"/>
</dbReference>
<dbReference type="GeneID" id="122664"/>
<dbReference type="KEGG" id="hsa:122664"/>
<dbReference type="MANE-Select" id="ENST00000321760.11">
    <property type="protein sequence ID" value="ENSP00000317595.6"/>
    <property type="RefSeq nucleotide sequence ID" value="NM_173846.5"/>
    <property type="RefSeq protein sequence ID" value="NP_776245.2"/>
</dbReference>
<dbReference type="UCSC" id="uc001vzh.4">
    <property type="organism name" value="human"/>
</dbReference>
<dbReference type="AGR" id="HGNC:19293"/>
<dbReference type="CTD" id="122664"/>
<dbReference type="DisGeNET" id="122664"/>
<dbReference type="GeneCards" id="TPPP2"/>
<dbReference type="HGNC" id="HGNC:19293">
    <property type="gene designation" value="TPPP2"/>
</dbReference>
<dbReference type="HPA" id="ENSG00000179636">
    <property type="expression patterns" value="Tissue enriched (testis)"/>
</dbReference>
<dbReference type="MIM" id="616956">
    <property type="type" value="gene"/>
</dbReference>
<dbReference type="neXtProt" id="NX_P59282"/>
<dbReference type="OpenTargets" id="ENSG00000179636"/>
<dbReference type="PharmGKB" id="PA162406822"/>
<dbReference type="VEuPathDB" id="HostDB:ENSG00000179636"/>
<dbReference type="eggNOG" id="KOG4070">
    <property type="taxonomic scope" value="Eukaryota"/>
</dbReference>
<dbReference type="GeneTree" id="ENSGT00940000153875"/>
<dbReference type="HOGENOM" id="CLU_091734_0_0_1"/>
<dbReference type="InParanoid" id="P59282"/>
<dbReference type="OMA" id="KELGQMR"/>
<dbReference type="OrthoDB" id="548799at2759"/>
<dbReference type="PAN-GO" id="P59282">
    <property type="GO annotations" value="4 GO annotations based on evolutionary models"/>
</dbReference>
<dbReference type="PhylomeDB" id="P59282"/>
<dbReference type="TreeFam" id="TF314440"/>
<dbReference type="PathwayCommons" id="P59282"/>
<dbReference type="BioGRID-ORCS" id="122664">
    <property type="hits" value="13 hits in 1148 CRISPR screens"/>
</dbReference>
<dbReference type="GenomeRNAi" id="122664"/>
<dbReference type="Pharos" id="P59282">
    <property type="development level" value="Tdark"/>
</dbReference>
<dbReference type="PRO" id="PR:P59282"/>
<dbReference type="Proteomes" id="UP000005640">
    <property type="component" value="Chromosome 14"/>
</dbReference>
<dbReference type="RNAct" id="P59282">
    <property type="molecule type" value="protein"/>
</dbReference>
<dbReference type="Bgee" id="ENSG00000179636">
    <property type="expression patterns" value="Expressed in sperm and 104 other cell types or tissues"/>
</dbReference>
<dbReference type="ExpressionAtlas" id="P59282">
    <property type="expression patterns" value="baseline and differential"/>
</dbReference>
<dbReference type="GO" id="GO:0005829">
    <property type="term" value="C:cytosol"/>
    <property type="evidence" value="ECO:0000314"/>
    <property type="project" value="UniProtKB"/>
</dbReference>
<dbReference type="GO" id="GO:0036126">
    <property type="term" value="C:sperm flagellum"/>
    <property type="evidence" value="ECO:0000250"/>
    <property type="project" value="UniProtKB"/>
</dbReference>
<dbReference type="GO" id="GO:0015631">
    <property type="term" value="F:tubulin binding"/>
    <property type="evidence" value="ECO:0000314"/>
    <property type="project" value="UniProtKB"/>
</dbReference>
<dbReference type="GO" id="GO:0030154">
    <property type="term" value="P:cell differentiation"/>
    <property type="evidence" value="ECO:0007669"/>
    <property type="project" value="UniProtKB-KW"/>
</dbReference>
<dbReference type="GO" id="GO:0046785">
    <property type="term" value="P:microtubule polymerization"/>
    <property type="evidence" value="ECO:0000318"/>
    <property type="project" value="GO_Central"/>
</dbReference>
<dbReference type="GO" id="GO:0032273">
    <property type="term" value="P:positive regulation of protein polymerization"/>
    <property type="evidence" value="ECO:0000318"/>
    <property type="project" value="GO_Central"/>
</dbReference>
<dbReference type="GO" id="GO:1901317">
    <property type="term" value="P:regulation of flagellated sperm motility"/>
    <property type="evidence" value="ECO:0000315"/>
    <property type="project" value="UniProtKB"/>
</dbReference>
<dbReference type="GO" id="GO:0007283">
    <property type="term" value="P:spermatogenesis"/>
    <property type="evidence" value="ECO:0007669"/>
    <property type="project" value="UniProtKB-KW"/>
</dbReference>
<dbReference type="FunFam" id="1.10.238.10:FF:000057">
    <property type="entry name" value="Tubulin polymerization-promoting protein family member 3"/>
    <property type="match status" value="1"/>
</dbReference>
<dbReference type="Gene3D" id="1.10.238.10">
    <property type="entry name" value="EF-hand"/>
    <property type="match status" value="1"/>
</dbReference>
<dbReference type="InterPro" id="IPR011992">
    <property type="entry name" value="EF-hand-dom_pair"/>
</dbReference>
<dbReference type="InterPro" id="IPR008907">
    <property type="entry name" value="TPP/p25"/>
</dbReference>
<dbReference type="PANTHER" id="PTHR12932">
    <property type="entry name" value="P25 ALPHA-RELATED"/>
    <property type="match status" value="1"/>
</dbReference>
<dbReference type="PANTHER" id="PTHR12932:SF21">
    <property type="entry name" value="TUBULIN POLYMERIZATION-PROMOTING PROTEIN FAMILY MEMBER 2"/>
    <property type="match status" value="1"/>
</dbReference>
<dbReference type="Pfam" id="PF05517">
    <property type="entry name" value="p25-alpha"/>
    <property type="match status" value="1"/>
</dbReference>
<dbReference type="SUPFAM" id="SSF47473">
    <property type="entry name" value="EF-hand"/>
    <property type="match status" value="1"/>
</dbReference>
<organism>
    <name type="scientific">Homo sapiens</name>
    <name type="common">Human</name>
    <dbReference type="NCBI Taxonomy" id="9606"/>
    <lineage>
        <taxon>Eukaryota</taxon>
        <taxon>Metazoa</taxon>
        <taxon>Chordata</taxon>
        <taxon>Craniata</taxon>
        <taxon>Vertebrata</taxon>
        <taxon>Euteleostomi</taxon>
        <taxon>Mammalia</taxon>
        <taxon>Eutheria</taxon>
        <taxon>Euarchontoglires</taxon>
        <taxon>Primates</taxon>
        <taxon>Haplorrhini</taxon>
        <taxon>Catarrhini</taxon>
        <taxon>Hominidae</taxon>
        <taxon>Homo</taxon>
    </lineage>
</organism>
<keyword id="KW-0966">Cell projection</keyword>
<keyword id="KW-0969">Cilium</keyword>
<keyword id="KW-0963">Cytoplasm</keyword>
<keyword id="KW-0221">Differentiation</keyword>
<keyword id="KW-0282">Flagellum</keyword>
<keyword id="KW-1267">Proteomics identification</keyword>
<keyword id="KW-1185">Reference proteome</keyword>
<keyword id="KW-0744">Spermatogenesis</keyword>
<reference key="1">
    <citation type="submission" date="2001-12" db="EMBL/GenBank/DDBJ databases">
        <title>Cloning and characterization of a novel human gene homolog with bovine p25.</title>
        <authorList>
            <person name="Zhang Z."/>
            <person name="Wang S."/>
            <person name="Mao Y."/>
        </authorList>
    </citation>
    <scope>NUCLEOTIDE SEQUENCE [MRNA]</scope>
    <scope>VARIANT LEU-133</scope>
</reference>
<reference key="2">
    <citation type="submission" date="2002-11" db="EMBL/GenBank/DDBJ databases">
        <title>Characterization of a novel human gene that has a high identity with Bos taurus brain-specific protein p25.</title>
        <authorList>
            <person name="Xu J."/>
            <person name="Xie Y."/>
            <person name="Mao Y."/>
        </authorList>
    </citation>
    <scope>NUCLEOTIDE SEQUENCE [MRNA]</scope>
    <scope>VARIANT LEU-133</scope>
</reference>
<reference key="3">
    <citation type="journal article" date="2003" name="Nature">
        <title>The DNA sequence and analysis of human chromosome 14.</title>
        <authorList>
            <person name="Heilig R."/>
            <person name="Eckenberg R."/>
            <person name="Petit J.-L."/>
            <person name="Fonknechten N."/>
            <person name="Da Silva C."/>
            <person name="Cattolico L."/>
            <person name="Levy M."/>
            <person name="Barbe V."/>
            <person name="De Berardinis V."/>
            <person name="Ureta-Vidal A."/>
            <person name="Pelletier E."/>
            <person name="Vico V."/>
            <person name="Anthouard V."/>
            <person name="Rowen L."/>
            <person name="Madan A."/>
            <person name="Qin S."/>
            <person name="Sun H."/>
            <person name="Du H."/>
            <person name="Pepin K."/>
            <person name="Artiguenave F."/>
            <person name="Robert C."/>
            <person name="Cruaud C."/>
            <person name="Bruels T."/>
            <person name="Jaillon O."/>
            <person name="Friedlander L."/>
            <person name="Samson G."/>
            <person name="Brottier P."/>
            <person name="Cure S."/>
            <person name="Segurens B."/>
            <person name="Aniere F."/>
            <person name="Samain S."/>
            <person name="Crespeau H."/>
            <person name="Abbasi N."/>
            <person name="Aiach N."/>
            <person name="Boscus D."/>
            <person name="Dickhoff R."/>
            <person name="Dors M."/>
            <person name="Dubois I."/>
            <person name="Friedman C."/>
            <person name="Gouyvenoux M."/>
            <person name="James R."/>
            <person name="Madan A."/>
            <person name="Mairey-Estrada B."/>
            <person name="Mangenot S."/>
            <person name="Martins N."/>
            <person name="Menard M."/>
            <person name="Oztas S."/>
            <person name="Ratcliffe A."/>
            <person name="Shaffer T."/>
            <person name="Trask B."/>
            <person name="Vacherie B."/>
            <person name="Bellemere C."/>
            <person name="Belser C."/>
            <person name="Besnard-Gonnet M."/>
            <person name="Bartol-Mavel D."/>
            <person name="Boutard M."/>
            <person name="Briez-Silla S."/>
            <person name="Combette S."/>
            <person name="Dufosse-Laurent V."/>
            <person name="Ferron C."/>
            <person name="Lechaplais C."/>
            <person name="Louesse C."/>
            <person name="Muselet D."/>
            <person name="Magdelenat G."/>
            <person name="Pateau E."/>
            <person name="Petit E."/>
            <person name="Sirvain-Trukniewicz P."/>
            <person name="Trybou A."/>
            <person name="Vega-Czarny N."/>
            <person name="Bataille E."/>
            <person name="Bluet E."/>
            <person name="Bordelais I."/>
            <person name="Dubois M."/>
            <person name="Dumont C."/>
            <person name="Guerin T."/>
            <person name="Haffray S."/>
            <person name="Hammadi R."/>
            <person name="Muanga J."/>
            <person name="Pellouin V."/>
            <person name="Robert D."/>
            <person name="Wunderle E."/>
            <person name="Gauguet G."/>
            <person name="Roy A."/>
            <person name="Sainte-Marthe L."/>
            <person name="Verdier J."/>
            <person name="Verdier-Discala C."/>
            <person name="Hillier L.W."/>
            <person name="Fulton L."/>
            <person name="McPherson J."/>
            <person name="Matsuda F."/>
            <person name="Wilson R."/>
            <person name="Scarpelli C."/>
            <person name="Gyapay G."/>
            <person name="Wincker P."/>
            <person name="Saurin W."/>
            <person name="Quetier F."/>
            <person name="Waterston R."/>
            <person name="Hood L."/>
            <person name="Weissenbach J."/>
        </authorList>
    </citation>
    <scope>NUCLEOTIDE SEQUENCE [LARGE SCALE GENOMIC DNA]</scope>
</reference>
<reference key="4">
    <citation type="journal article" date="2004" name="Genome Res.">
        <title>The status, quality, and expansion of the NIH full-length cDNA project: the Mammalian Gene Collection (MGC).</title>
        <authorList>
            <consortium name="The MGC Project Team"/>
        </authorList>
    </citation>
    <scope>NUCLEOTIDE SEQUENCE [LARGE SCALE MRNA]</scope>
    <scope>VARIANT LEU-133</scope>
    <source>
        <tissue>Brain</tissue>
    </source>
</reference>
<reference key="5">
    <citation type="journal article" date="2006" name="Biochemistry">
        <title>Tubulin polymerization promoting proteins (TPPPs): members of a new family with distinct structures and functions.</title>
        <authorList>
            <person name="Vincze O."/>
            <person name="Toekesi N."/>
            <person name="Olah J."/>
            <person name="Hlavanda E."/>
            <person name="Zotter A."/>
            <person name="Horvath I."/>
            <person name="Lehotzky A."/>
            <person name="Tirian L."/>
            <person name="Medzihradszky K.F."/>
            <person name="Kovacs J."/>
            <person name="Orosz F."/>
            <person name="Ovadi J."/>
        </authorList>
    </citation>
    <scope>FUNCTION</scope>
    <scope>SUBCELLULAR LOCATION</scope>
</reference>
<reference key="6">
    <citation type="journal article" date="2013" name="Proteomics">
        <title>Scanning of novel cancer/testis proteins by human testis proteomic analysis.</title>
        <authorList>
            <person name="Liu M."/>
            <person name="Hu Z."/>
            <person name="Qi L."/>
            <person name="Wang J."/>
            <person name="Zhou T."/>
            <person name="Guo Y."/>
            <person name="Zeng Y."/>
            <person name="Zheng B."/>
            <person name="Wu Y."/>
            <person name="Zhang P."/>
            <person name="Chen X."/>
            <person name="Tu W."/>
            <person name="Zhang T."/>
            <person name="Zhou Q."/>
            <person name="Jiang M."/>
            <person name="Guo X."/>
            <person name="Zhou Z."/>
            <person name="Sha J."/>
        </authorList>
    </citation>
    <scope>TISSUE SPECIFICITY</scope>
</reference>
<reference key="7">
    <citation type="journal article" date="2019" name="J. Cell. Mol. Med.">
        <title>Deficiency of TPPP2, a factor linked to oligoasthenozoospermia, causes subfertility in male mice.</title>
        <authorList>
            <person name="Zhu F."/>
            <person name="Yan P."/>
            <person name="Zhang J."/>
            <person name="Cui Y."/>
            <person name="Zheng M."/>
            <person name="Cheng Y."/>
            <person name="Guo Y."/>
            <person name="Yang X."/>
            <person name="Guo X."/>
            <person name="Zhu H."/>
        </authorList>
    </citation>
    <scope>FUNCTION</scope>
</reference>
<gene>
    <name evidence="9 14" type="primary">TPPP2</name>
    <name evidence="14" type="synonym">C14orf8</name>
</gene>
<feature type="chain" id="PRO_0000221137" description="Tubulin polymerization-promoting protein family member 2">
    <location>
        <begin position="1"/>
        <end position="170"/>
    </location>
</feature>
<feature type="region of interest" description="Disordered" evidence="2">
    <location>
        <begin position="127"/>
        <end position="170"/>
    </location>
</feature>
<feature type="compositionally biased region" description="Basic and acidic residues" evidence="2">
    <location>
        <begin position="129"/>
        <end position="149"/>
    </location>
</feature>
<feature type="sequence variant" id="VAR_059147" description="In dbSNP:rs9624." evidence="3 6 7">
    <original>R</original>
    <variation>L</variation>
    <location>
        <position position="133"/>
    </location>
</feature>